<gene>
    <name evidence="1" type="primary">minE</name>
    <name type="ordered locus">SPAB_01400</name>
</gene>
<keyword id="KW-0131">Cell cycle</keyword>
<keyword id="KW-0132">Cell division</keyword>
<dbReference type="EMBL" id="CP000886">
    <property type="protein sequence ID" value="ABX66807.1"/>
    <property type="molecule type" value="Genomic_DNA"/>
</dbReference>
<dbReference type="RefSeq" id="WP_001185666.1">
    <property type="nucleotide sequence ID" value="NC_010102.1"/>
</dbReference>
<dbReference type="SMR" id="A9MVV1"/>
<dbReference type="GeneID" id="92972923"/>
<dbReference type="KEGG" id="spq:SPAB_01400"/>
<dbReference type="PATRIC" id="fig|1016998.12.peg.1319"/>
<dbReference type="HOGENOM" id="CLU_137929_2_2_6"/>
<dbReference type="BioCyc" id="SENT1016998:SPAB_RS05730-MONOMER"/>
<dbReference type="Proteomes" id="UP000008556">
    <property type="component" value="Chromosome"/>
</dbReference>
<dbReference type="GO" id="GO:0051301">
    <property type="term" value="P:cell division"/>
    <property type="evidence" value="ECO:0007669"/>
    <property type="project" value="UniProtKB-KW"/>
</dbReference>
<dbReference type="GO" id="GO:0032955">
    <property type="term" value="P:regulation of division septum assembly"/>
    <property type="evidence" value="ECO:0007669"/>
    <property type="project" value="InterPro"/>
</dbReference>
<dbReference type="FunFam" id="3.30.1070.10:FF:000001">
    <property type="entry name" value="Cell division topological specificity factor"/>
    <property type="match status" value="1"/>
</dbReference>
<dbReference type="Gene3D" id="3.30.1070.10">
    <property type="entry name" value="Cell division topological specificity factor MinE"/>
    <property type="match status" value="1"/>
</dbReference>
<dbReference type="HAMAP" id="MF_00262">
    <property type="entry name" value="MinE"/>
    <property type="match status" value="1"/>
</dbReference>
<dbReference type="InterPro" id="IPR005527">
    <property type="entry name" value="MinE"/>
</dbReference>
<dbReference type="InterPro" id="IPR036707">
    <property type="entry name" value="MinE_sf"/>
</dbReference>
<dbReference type="NCBIfam" id="TIGR01215">
    <property type="entry name" value="minE"/>
    <property type="match status" value="1"/>
</dbReference>
<dbReference type="NCBIfam" id="NF001422">
    <property type="entry name" value="PRK00296.1"/>
    <property type="match status" value="1"/>
</dbReference>
<dbReference type="Pfam" id="PF03776">
    <property type="entry name" value="MinE"/>
    <property type="match status" value="1"/>
</dbReference>
<dbReference type="SUPFAM" id="SSF55229">
    <property type="entry name" value="Cell division protein MinE topological specificity domain"/>
    <property type="match status" value="1"/>
</dbReference>
<protein>
    <recommendedName>
        <fullName evidence="1">Cell division topological specificity factor</fullName>
    </recommendedName>
</protein>
<organism>
    <name type="scientific">Salmonella paratyphi B (strain ATCC BAA-1250 / SPB7)</name>
    <dbReference type="NCBI Taxonomy" id="1016998"/>
    <lineage>
        <taxon>Bacteria</taxon>
        <taxon>Pseudomonadati</taxon>
        <taxon>Pseudomonadota</taxon>
        <taxon>Gammaproteobacteria</taxon>
        <taxon>Enterobacterales</taxon>
        <taxon>Enterobacteriaceae</taxon>
        <taxon>Salmonella</taxon>
    </lineage>
</organism>
<sequence length="88" mass="10182">MALLDFFLSRKKSTANIAKERLQIIVAERRRSDAEPHYLPQLRKDILEVICKYVQIDPEMVTVQLEQKDGDISILELNVTLPEAEESK</sequence>
<accession>A9MVV1</accession>
<evidence type="ECO:0000255" key="1">
    <source>
        <dbReference type="HAMAP-Rule" id="MF_00262"/>
    </source>
</evidence>
<proteinExistence type="inferred from homology"/>
<name>MINE_SALPB</name>
<reference key="1">
    <citation type="submission" date="2007-11" db="EMBL/GenBank/DDBJ databases">
        <authorList>
            <consortium name="The Salmonella enterica serovar Paratyphi B Genome Sequencing Project"/>
            <person name="McClelland M."/>
            <person name="Sanderson E.K."/>
            <person name="Porwollik S."/>
            <person name="Spieth J."/>
            <person name="Clifton W.S."/>
            <person name="Fulton R."/>
            <person name="Cordes M."/>
            <person name="Wollam A."/>
            <person name="Shah N."/>
            <person name="Pepin K."/>
            <person name="Bhonagiri V."/>
            <person name="Nash W."/>
            <person name="Johnson M."/>
            <person name="Thiruvilangam P."/>
            <person name="Wilson R."/>
        </authorList>
    </citation>
    <scope>NUCLEOTIDE SEQUENCE [LARGE SCALE GENOMIC DNA]</scope>
    <source>
        <strain>ATCC BAA-1250 / SPB7</strain>
    </source>
</reference>
<feature type="chain" id="PRO_1000078645" description="Cell division topological specificity factor">
    <location>
        <begin position="1"/>
        <end position="88"/>
    </location>
</feature>
<comment type="function">
    <text evidence="1">Prevents the cell division inhibition by proteins MinC and MinD at internal division sites while permitting inhibition at polar sites. This ensures cell division at the proper site by restricting the formation of a division septum at the midpoint of the long axis of the cell.</text>
</comment>
<comment type="similarity">
    <text evidence="1">Belongs to the MinE family.</text>
</comment>